<proteinExistence type="inferred from homology"/>
<evidence type="ECO:0000255" key="1">
    <source>
        <dbReference type="HAMAP-Rule" id="MF_01363"/>
    </source>
</evidence>
<evidence type="ECO:0000305" key="2"/>
<accession>A1JIV3</accession>
<gene>
    <name evidence="1" type="primary">rplU</name>
    <name type="ordered locus">YE0418</name>
</gene>
<protein>
    <recommendedName>
        <fullName evidence="1">Large ribosomal subunit protein bL21</fullName>
    </recommendedName>
    <alternativeName>
        <fullName evidence="2">50S ribosomal protein L21</fullName>
    </alternativeName>
</protein>
<feature type="chain" id="PRO_1000067916" description="Large ribosomal subunit protein bL21">
    <location>
        <begin position="1"/>
        <end position="103"/>
    </location>
</feature>
<keyword id="KW-0687">Ribonucleoprotein</keyword>
<keyword id="KW-0689">Ribosomal protein</keyword>
<keyword id="KW-0694">RNA-binding</keyword>
<keyword id="KW-0699">rRNA-binding</keyword>
<dbReference type="EMBL" id="AM286415">
    <property type="protein sequence ID" value="CAL10544.1"/>
    <property type="molecule type" value="Genomic_DNA"/>
</dbReference>
<dbReference type="RefSeq" id="WP_004699896.1">
    <property type="nucleotide sequence ID" value="NC_008800.1"/>
</dbReference>
<dbReference type="RefSeq" id="YP_001004788.1">
    <property type="nucleotide sequence ID" value="NC_008800.1"/>
</dbReference>
<dbReference type="SMR" id="A1JIV3"/>
<dbReference type="GeneID" id="93968897"/>
<dbReference type="KEGG" id="yen:YE0418"/>
<dbReference type="PATRIC" id="fig|393305.7.peg.514"/>
<dbReference type="eggNOG" id="COG0261">
    <property type="taxonomic scope" value="Bacteria"/>
</dbReference>
<dbReference type="HOGENOM" id="CLU_061463_3_3_6"/>
<dbReference type="OrthoDB" id="9813334at2"/>
<dbReference type="Proteomes" id="UP000000642">
    <property type="component" value="Chromosome"/>
</dbReference>
<dbReference type="GO" id="GO:0005737">
    <property type="term" value="C:cytoplasm"/>
    <property type="evidence" value="ECO:0007669"/>
    <property type="project" value="UniProtKB-ARBA"/>
</dbReference>
<dbReference type="GO" id="GO:1990904">
    <property type="term" value="C:ribonucleoprotein complex"/>
    <property type="evidence" value="ECO:0007669"/>
    <property type="project" value="UniProtKB-KW"/>
</dbReference>
<dbReference type="GO" id="GO:0005840">
    <property type="term" value="C:ribosome"/>
    <property type="evidence" value="ECO:0007669"/>
    <property type="project" value="UniProtKB-KW"/>
</dbReference>
<dbReference type="GO" id="GO:0019843">
    <property type="term" value="F:rRNA binding"/>
    <property type="evidence" value="ECO:0007669"/>
    <property type="project" value="UniProtKB-UniRule"/>
</dbReference>
<dbReference type="GO" id="GO:0003735">
    <property type="term" value="F:structural constituent of ribosome"/>
    <property type="evidence" value="ECO:0007669"/>
    <property type="project" value="InterPro"/>
</dbReference>
<dbReference type="GO" id="GO:0006412">
    <property type="term" value="P:translation"/>
    <property type="evidence" value="ECO:0007669"/>
    <property type="project" value="UniProtKB-UniRule"/>
</dbReference>
<dbReference type="HAMAP" id="MF_01363">
    <property type="entry name" value="Ribosomal_bL21"/>
    <property type="match status" value="1"/>
</dbReference>
<dbReference type="InterPro" id="IPR028909">
    <property type="entry name" value="bL21-like"/>
</dbReference>
<dbReference type="InterPro" id="IPR036164">
    <property type="entry name" value="bL21-like_sf"/>
</dbReference>
<dbReference type="InterPro" id="IPR001787">
    <property type="entry name" value="Ribosomal_bL21"/>
</dbReference>
<dbReference type="InterPro" id="IPR018258">
    <property type="entry name" value="Ribosomal_bL21_CS"/>
</dbReference>
<dbReference type="NCBIfam" id="TIGR00061">
    <property type="entry name" value="L21"/>
    <property type="match status" value="1"/>
</dbReference>
<dbReference type="PANTHER" id="PTHR21349">
    <property type="entry name" value="50S RIBOSOMAL PROTEIN L21"/>
    <property type="match status" value="1"/>
</dbReference>
<dbReference type="PANTHER" id="PTHR21349:SF0">
    <property type="entry name" value="LARGE RIBOSOMAL SUBUNIT PROTEIN BL21M"/>
    <property type="match status" value="1"/>
</dbReference>
<dbReference type="Pfam" id="PF00829">
    <property type="entry name" value="Ribosomal_L21p"/>
    <property type="match status" value="1"/>
</dbReference>
<dbReference type="SUPFAM" id="SSF141091">
    <property type="entry name" value="L21p-like"/>
    <property type="match status" value="1"/>
</dbReference>
<dbReference type="PROSITE" id="PS01169">
    <property type="entry name" value="RIBOSOMAL_L21"/>
    <property type="match status" value="1"/>
</dbReference>
<name>RL21_YERE8</name>
<comment type="function">
    <text evidence="1">This protein binds to 23S rRNA in the presence of protein L20.</text>
</comment>
<comment type="subunit">
    <text evidence="1">Part of the 50S ribosomal subunit. Contacts protein L20.</text>
</comment>
<comment type="similarity">
    <text evidence="1">Belongs to the bacterial ribosomal protein bL21 family.</text>
</comment>
<organism>
    <name type="scientific">Yersinia enterocolitica serotype O:8 / biotype 1B (strain NCTC 13174 / 8081)</name>
    <dbReference type="NCBI Taxonomy" id="393305"/>
    <lineage>
        <taxon>Bacteria</taxon>
        <taxon>Pseudomonadati</taxon>
        <taxon>Pseudomonadota</taxon>
        <taxon>Gammaproteobacteria</taxon>
        <taxon>Enterobacterales</taxon>
        <taxon>Yersiniaceae</taxon>
        <taxon>Yersinia</taxon>
    </lineage>
</organism>
<reference key="1">
    <citation type="journal article" date="2006" name="PLoS Genet.">
        <title>The complete genome sequence and comparative genome analysis of the high pathogenicity Yersinia enterocolitica strain 8081.</title>
        <authorList>
            <person name="Thomson N.R."/>
            <person name="Howard S."/>
            <person name="Wren B.W."/>
            <person name="Holden M.T.G."/>
            <person name="Crossman L."/>
            <person name="Challis G.L."/>
            <person name="Churcher C."/>
            <person name="Mungall K."/>
            <person name="Brooks K."/>
            <person name="Chillingworth T."/>
            <person name="Feltwell T."/>
            <person name="Abdellah Z."/>
            <person name="Hauser H."/>
            <person name="Jagels K."/>
            <person name="Maddison M."/>
            <person name="Moule S."/>
            <person name="Sanders M."/>
            <person name="Whitehead S."/>
            <person name="Quail M.A."/>
            <person name="Dougan G."/>
            <person name="Parkhill J."/>
            <person name="Prentice M.B."/>
        </authorList>
    </citation>
    <scope>NUCLEOTIDE SEQUENCE [LARGE SCALE GENOMIC DNA]</scope>
    <source>
        <strain>NCTC 13174 / 8081</strain>
    </source>
</reference>
<sequence length="103" mass="11513">MYAVFQSGGKQHRVSEGQTIRLEKLDIATGEAVEFDQVLMIANGEEINIGAPLVVGGVVKAEVVAHGRGEKIKIVKFRRRKHYRKQQGHRQWFTDVKITGISA</sequence>